<keyword id="KW-0217">Developmental protein</keyword>
<keyword id="KW-0221">Differentiation</keyword>
<keyword id="KW-1015">Disulfide bond</keyword>
<keyword id="KW-0325">Glycoprotein</keyword>
<keyword id="KW-1185">Reference proteome</keyword>
<keyword id="KW-0964">Secreted</keyword>
<keyword id="KW-0732">Signal</keyword>
<keyword id="KW-0879">Wnt signaling pathway</keyword>
<evidence type="ECO:0000250" key="1"/>
<evidence type="ECO:0000255" key="2"/>
<evidence type="ECO:0000255" key="3">
    <source>
        <dbReference type="PROSITE-ProRule" id="PRU00090"/>
    </source>
</evidence>
<evidence type="ECO:0000255" key="4">
    <source>
        <dbReference type="PROSITE-ProRule" id="PRU00295"/>
    </source>
</evidence>
<evidence type="ECO:0000256" key="5">
    <source>
        <dbReference type="SAM" id="MobiDB-lite"/>
    </source>
</evidence>
<evidence type="ECO:0000305" key="6"/>
<sequence length="325" mass="36254">MVCGSPGGMLLLRAGLLALAALCLLRVPGARAAACEPVRIPLCKSLPWNMTKMPNHLHHSTQANAILAIEQFEGLLGTHCSPDLLFFLCAMYAPICTIDFQHEPIKPCKSVCERARQGCEPILIKYRHSWPENLACEELPVYDRGVCISPEAIVTADGADFPMDSSNGNCRGASSERCKCKPIRATQKTYFRNNYNYVIRAKVKEIKTKCHDVTAVVEVKEILKSSLVNIPRDTVNLYTSSGCLCPPLNVNEEYIIMGYEDEERSRLLLVEGSIAEKWKDRLGKKVKRWDMKLRHLGLSKSDSSNSDSTQSQKSGRNSNPRQARN</sequence>
<dbReference type="EMBL" id="CR857294">
    <property type="protein sequence ID" value="CAH89590.1"/>
    <property type="molecule type" value="mRNA"/>
</dbReference>
<dbReference type="RefSeq" id="NP_001124703.1">
    <property type="nucleotide sequence ID" value="NM_001131231.2"/>
</dbReference>
<dbReference type="SMR" id="Q5RF67"/>
<dbReference type="FunCoup" id="Q5RF67">
    <property type="interactions" value="286"/>
</dbReference>
<dbReference type="STRING" id="9601.ENSPPYP00000014518"/>
<dbReference type="GlyCosmos" id="Q5RF67">
    <property type="glycosylation" value="1 site, No reported glycans"/>
</dbReference>
<dbReference type="Ensembl" id="ENSPPYT00000015107.3">
    <property type="protein sequence ID" value="ENSPPYP00000014518.2"/>
    <property type="gene ID" value="ENSPPYG00000012995.3"/>
</dbReference>
<dbReference type="GeneID" id="100171551"/>
<dbReference type="KEGG" id="pon:100171551"/>
<dbReference type="CTD" id="2487"/>
<dbReference type="eggNOG" id="KOG3577">
    <property type="taxonomic scope" value="Eukaryota"/>
</dbReference>
<dbReference type="GeneTree" id="ENSGT00940000160494"/>
<dbReference type="HOGENOM" id="CLU_058446_1_0_1"/>
<dbReference type="InParanoid" id="Q5RF67"/>
<dbReference type="OMA" id="NAERCKC"/>
<dbReference type="OrthoDB" id="5946121at2759"/>
<dbReference type="Proteomes" id="UP000001595">
    <property type="component" value="Chromosome 2B"/>
</dbReference>
<dbReference type="GO" id="GO:0005737">
    <property type="term" value="C:cytoplasm"/>
    <property type="evidence" value="ECO:0007669"/>
    <property type="project" value="TreeGrafter"/>
</dbReference>
<dbReference type="GO" id="GO:0005615">
    <property type="term" value="C:extracellular space"/>
    <property type="evidence" value="ECO:0007669"/>
    <property type="project" value="TreeGrafter"/>
</dbReference>
<dbReference type="GO" id="GO:0017147">
    <property type="term" value="F:Wnt-protein binding"/>
    <property type="evidence" value="ECO:0007669"/>
    <property type="project" value="Ensembl"/>
</dbReference>
<dbReference type="GO" id="GO:0060070">
    <property type="term" value="P:canonical Wnt signaling pathway"/>
    <property type="evidence" value="ECO:0007669"/>
    <property type="project" value="TreeGrafter"/>
</dbReference>
<dbReference type="GO" id="GO:0090103">
    <property type="term" value="P:cochlea morphogenesis"/>
    <property type="evidence" value="ECO:0007669"/>
    <property type="project" value="Ensembl"/>
</dbReference>
<dbReference type="GO" id="GO:0060029">
    <property type="term" value="P:convergent extension involved in organogenesis"/>
    <property type="evidence" value="ECO:0007669"/>
    <property type="project" value="Ensembl"/>
</dbReference>
<dbReference type="GO" id="GO:0002064">
    <property type="term" value="P:epithelial cell development"/>
    <property type="evidence" value="ECO:0007669"/>
    <property type="project" value="Ensembl"/>
</dbReference>
<dbReference type="GO" id="GO:0070365">
    <property type="term" value="P:hepatocyte differentiation"/>
    <property type="evidence" value="ECO:0007669"/>
    <property type="project" value="Ensembl"/>
</dbReference>
<dbReference type="GO" id="GO:0090090">
    <property type="term" value="P:negative regulation of canonical Wnt signaling pathway"/>
    <property type="evidence" value="ECO:0007669"/>
    <property type="project" value="Ensembl"/>
</dbReference>
<dbReference type="GO" id="GO:0061037">
    <property type="term" value="P:negative regulation of cartilage development"/>
    <property type="evidence" value="ECO:0007669"/>
    <property type="project" value="Ensembl"/>
</dbReference>
<dbReference type="GO" id="GO:0010721">
    <property type="term" value="P:negative regulation of cell development"/>
    <property type="evidence" value="ECO:0007669"/>
    <property type="project" value="Ensembl"/>
</dbReference>
<dbReference type="GO" id="GO:0030308">
    <property type="term" value="P:negative regulation of cell growth"/>
    <property type="evidence" value="ECO:0007669"/>
    <property type="project" value="Ensembl"/>
</dbReference>
<dbReference type="GO" id="GO:0008285">
    <property type="term" value="P:negative regulation of cell population proliferation"/>
    <property type="evidence" value="ECO:0007669"/>
    <property type="project" value="Ensembl"/>
</dbReference>
<dbReference type="GO" id="GO:0070367">
    <property type="term" value="P:negative regulation of hepatocyte differentiation"/>
    <property type="evidence" value="ECO:0007669"/>
    <property type="project" value="Ensembl"/>
</dbReference>
<dbReference type="GO" id="GO:0014033">
    <property type="term" value="P:neural crest cell differentiation"/>
    <property type="evidence" value="ECO:0007669"/>
    <property type="project" value="Ensembl"/>
</dbReference>
<dbReference type="GO" id="GO:0035567">
    <property type="term" value="P:non-canonical Wnt signaling pathway"/>
    <property type="evidence" value="ECO:0007669"/>
    <property type="project" value="TreeGrafter"/>
</dbReference>
<dbReference type="GO" id="GO:0043065">
    <property type="term" value="P:positive regulation of apoptotic process"/>
    <property type="evidence" value="ECO:0007669"/>
    <property type="project" value="Ensembl"/>
</dbReference>
<dbReference type="GO" id="GO:0045600">
    <property type="term" value="P:positive regulation of fat cell differentiation"/>
    <property type="evidence" value="ECO:0007669"/>
    <property type="project" value="Ensembl"/>
</dbReference>
<dbReference type="GO" id="GO:0061053">
    <property type="term" value="P:somite development"/>
    <property type="evidence" value="ECO:0007669"/>
    <property type="project" value="Ensembl"/>
</dbReference>
<dbReference type="CDD" id="cd07441">
    <property type="entry name" value="CRD_SFRP3"/>
    <property type="match status" value="1"/>
</dbReference>
<dbReference type="CDD" id="cd03581">
    <property type="entry name" value="NTR_Sfrp3_like"/>
    <property type="match status" value="1"/>
</dbReference>
<dbReference type="FunFam" id="2.40.50.120:FF:000010">
    <property type="entry name" value="secreted frizzled-related protein 3"/>
    <property type="match status" value="1"/>
</dbReference>
<dbReference type="FunFam" id="1.10.2000.10:FF:000005">
    <property type="entry name" value="secreted frizzled-related protein 4"/>
    <property type="match status" value="1"/>
</dbReference>
<dbReference type="Gene3D" id="2.40.50.120">
    <property type="match status" value="1"/>
</dbReference>
<dbReference type="Gene3D" id="1.10.2000.10">
    <property type="entry name" value="Frizzled cysteine-rich domain"/>
    <property type="match status" value="1"/>
</dbReference>
<dbReference type="InterPro" id="IPR015526">
    <property type="entry name" value="Frizzled/SFRP"/>
</dbReference>
<dbReference type="InterPro" id="IPR020067">
    <property type="entry name" value="Frizzled_dom"/>
</dbReference>
<dbReference type="InterPro" id="IPR036790">
    <property type="entry name" value="Frizzled_dom_sf"/>
</dbReference>
<dbReference type="InterPro" id="IPR001134">
    <property type="entry name" value="Netrin_domain"/>
</dbReference>
<dbReference type="InterPro" id="IPR018933">
    <property type="entry name" value="Netrin_module_non-TIMP"/>
</dbReference>
<dbReference type="InterPro" id="IPR035813">
    <property type="entry name" value="NTR_Sfrp3"/>
</dbReference>
<dbReference type="InterPro" id="IPR041759">
    <property type="entry name" value="SFRP3_CRD"/>
</dbReference>
<dbReference type="InterPro" id="IPR008993">
    <property type="entry name" value="TIMP-like_OB-fold"/>
</dbReference>
<dbReference type="PANTHER" id="PTHR11309">
    <property type="entry name" value="FRIZZLED"/>
    <property type="match status" value="1"/>
</dbReference>
<dbReference type="PANTHER" id="PTHR11309:SF97">
    <property type="entry name" value="SECRETED FRIZZLED-RELATED PROTEIN 3"/>
    <property type="match status" value="1"/>
</dbReference>
<dbReference type="Pfam" id="PF01392">
    <property type="entry name" value="Fz"/>
    <property type="match status" value="1"/>
</dbReference>
<dbReference type="Pfam" id="PF01759">
    <property type="entry name" value="NTR"/>
    <property type="match status" value="1"/>
</dbReference>
<dbReference type="SMART" id="SM00643">
    <property type="entry name" value="C345C"/>
    <property type="match status" value="1"/>
</dbReference>
<dbReference type="SMART" id="SM00063">
    <property type="entry name" value="FRI"/>
    <property type="match status" value="1"/>
</dbReference>
<dbReference type="SUPFAM" id="SSF63501">
    <property type="entry name" value="Frizzled cysteine-rich domain"/>
    <property type="match status" value="1"/>
</dbReference>
<dbReference type="SUPFAM" id="SSF50242">
    <property type="entry name" value="TIMP-like"/>
    <property type="match status" value="1"/>
</dbReference>
<dbReference type="PROSITE" id="PS50038">
    <property type="entry name" value="FZ"/>
    <property type="match status" value="1"/>
</dbReference>
<dbReference type="PROSITE" id="PS50189">
    <property type="entry name" value="NTR"/>
    <property type="match status" value="1"/>
</dbReference>
<feature type="signal peptide" evidence="2">
    <location>
        <begin position="1"/>
        <end position="32"/>
    </location>
</feature>
<feature type="chain" id="PRO_0000032548" description="Secreted frizzled-related protein 3">
    <location>
        <begin position="33"/>
        <end position="325"/>
    </location>
</feature>
<feature type="domain" description="FZ" evidence="3">
    <location>
        <begin position="33"/>
        <end position="150"/>
    </location>
</feature>
<feature type="domain" description="NTR" evidence="4">
    <location>
        <begin position="178"/>
        <end position="298"/>
    </location>
</feature>
<feature type="region of interest" description="Disordered" evidence="5">
    <location>
        <begin position="297"/>
        <end position="325"/>
    </location>
</feature>
<feature type="compositionally biased region" description="Low complexity" evidence="5">
    <location>
        <begin position="299"/>
        <end position="314"/>
    </location>
</feature>
<feature type="compositionally biased region" description="Polar residues" evidence="5">
    <location>
        <begin position="315"/>
        <end position="325"/>
    </location>
</feature>
<feature type="glycosylation site" description="N-linked (GlcNAc...) asparagine" evidence="2">
    <location>
        <position position="49"/>
    </location>
</feature>
<feature type="disulfide bond" evidence="1">
    <location>
        <begin position="35"/>
        <end position="96"/>
    </location>
</feature>
<feature type="disulfide bond" evidence="1">
    <location>
        <begin position="43"/>
        <end position="89"/>
    </location>
</feature>
<feature type="disulfide bond" evidence="1">
    <location>
        <begin position="80"/>
        <end position="119"/>
    </location>
</feature>
<feature type="disulfide bond" evidence="1">
    <location>
        <begin position="108"/>
        <end position="147"/>
    </location>
</feature>
<feature type="disulfide bond" evidence="1">
    <location>
        <begin position="112"/>
        <end position="136"/>
    </location>
</feature>
<protein>
    <recommendedName>
        <fullName>Secreted frizzled-related protein 3</fullName>
        <shortName>sFRP-3</shortName>
    </recommendedName>
    <alternativeName>
        <fullName>Frizzled-related protein 1</fullName>
    </alternativeName>
    <alternativeName>
        <fullName>FrzB-1</fullName>
    </alternativeName>
</protein>
<organism>
    <name type="scientific">Pongo abelii</name>
    <name type="common">Sumatran orangutan</name>
    <name type="synonym">Pongo pygmaeus abelii</name>
    <dbReference type="NCBI Taxonomy" id="9601"/>
    <lineage>
        <taxon>Eukaryota</taxon>
        <taxon>Metazoa</taxon>
        <taxon>Chordata</taxon>
        <taxon>Craniata</taxon>
        <taxon>Vertebrata</taxon>
        <taxon>Euteleostomi</taxon>
        <taxon>Mammalia</taxon>
        <taxon>Eutheria</taxon>
        <taxon>Euarchontoglires</taxon>
        <taxon>Primates</taxon>
        <taxon>Haplorrhini</taxon>
        <taxon>Catarrhini</taxon>
        <taxon>Hominidae</taxon>
        <taxon>Pongo</taxon>
    </lineage>
</organism>
<gene>
    <name type="primary">FRZB</name>
    <name type="synonym">SFRP3</name>
</gene>
<reference key="1">
    <citation type="submission" date="2004-11" db="EMBL/GenBank/DDBJ databases">
        <authorList>
            <consortium name="The German cDNA consortium"/>
        </authorList>
    </citation>
    <scope>NUCLEOTIDE SEQUENCE [LARGE SCALE MRNA]</scope>
    <source>
        <tissue>Kidney</tissue>
    </source>
</reference>
<name>SFRP3_PONAB</name>
<accession>Q5RF67</accession>
<proteinExistence type="evidence at transcript level"/>
<comment type="function">
    <text evidence="1">Soluble frizzled-related proteins (sFRPS) function as modulators of Wnt signaling through direct interaction with Wnts. They have a role in regulating cell growth and differentiation in specific cell types. SFRP3/FRZB appears to be involved in limb skeletogenesis. Antagonist of Wnt8 signaling. Regulates chondrocyte maturation and long bone development (By similarity).</text>
</comment>
<comment type="subunit">
    <text evidence="1">Interacts with MYOC.</text>
</comment>
<comment type="subcellular location">
    <subcellularLocation>
        <location evidence="6">Secreted</location>
    </subcellularLocation>
</comment>
<comment type="domain">
    <text evidence="1">The FZ domain is involved in binding with Wnt ligands.</text>
</comment>
<comment type="similarity">
    <text evidence="6">Belongs to the secreted frizzled-related protein (sFRP) family.</text>
</comment>